<proteinExistence type="evidence at transcript level"/>
<keyword id="KW-0134">Cell wall</keyword>
<keyword id="KW-0325">Glycoprotein</keyword>
<keyword id="KW-0336">GPI-anchor</keyword>
<keyword id="KW-0449">Lipoprotein</keyword>
<keyword id="KW-0472">Membrane</keyword>
<keyword id="KW-1185">Reference proteome</keyword>
<keyword id="KW-0964">Secreted</keyword>
<keyword id="KW-0732">Signal</keyword>
<evidence type="ECO:0000250" key="1"/>
<evidence type="ECO:0000255" key="2"/>
<evidence type="ECO:0000256" key="3">
    <source>
        <dbReference type="SAM" id="MobiDB-lite"/>
    </source>
</evidence>
<evidence type="ECO:0000269" key="4">
    <source>
    </source>
</evidence>
<evidence type="ECO:0000305" key="5"/>
<evidence type="ECO:0000305" key="6">
    <source>
    </source>
</evidence>
<reference key="1">
    <citation type="journal article" date="1997" name="Nature">
        <title>The nucleotide sequence of Saccharomyces cerevisiae chromosome IX.</title>
        <authorList>
            <person name="Churcher C.M."/>
            <person name="Bowman S."/>
            <person name="Badcock K."/>
            <person name="Bankier A.T."/>
            <person name="Brown D."/>
            <person name="Chillingworth T."/>
            <person name="Connor R."/>
            <person name="Devlin K."/>
            <person name="Gentles S."/>
            <person name="Hamlin N."/>
            <person name="Harris D.E."/>
            <person name="Horsnell T."/>
            <person name="Hunt S."/>
            <person name="Jagels K."/>
            <person name="Jones M."/>
            <person name="Lye G."/>
            <person name="Moule S."/>
            <person name="Odell C."/>
            <person name="Pearson D."/>
            <person name="Rajandream M.A."/>
            <person name="Rice P."/>
            <person name="Rowley N."/>
            <person name="Skelton J."/>
            <person name="Smith V."/>
            <person name="Walsh S.V."/>
            <person name="Whitehead S."/>
            <person name="Barrell B.G."/>
        </authorList>
    </citation>
    <scope>NUCLEOTIDE SEQUENCE [LARGE SCALE GENOMIC DNA]</scope>
    <source>
        <strain>ATCC 204508 / S288c</strain>
    </source>
</reference>
<reference key="2">
    <citation type="journal article" date="2014" name="G3 (Bethesda)">
        <title>The reference genome sequence of Saccharomyces cerevisiae: Then and now.</title>
        <authorList>
            <person name="Engel S.R."/>
            <person name="Dietrich F.S."/>
            <person name="Fisk D.G."/>
            <person name="Binkley G."/>
            <person name="Balakrishnan R."/>
            <person name="Costanzo M.C."/>
            <person name="Dwight S.S."/>
            <person name="Hitz B.C."/>
            <person name="Karra K."/>
            <person name="Nash R.S."/>
            <person name="Weng S."/>
            <person name="Wong E.D."/>
            <person name="Lloyd P."/>
            <person name="Skrzypek M.S."/>
            <person name="Miyasato S.R."/>
            <person name="Simison M."/>
            <person name="Cherry J.M."/>
        </authorList>
    </citation>
    <scope>GENOME REANNOTATION</scope>
    <source>
        <strain>ATCC 204508 / S288c</strain>
    </source>
</reference>
<reference key="3">
    <citation type="journal article" date="1999" name="J. Bacteriol.">
        <title>Amino acid residues in the omega-minus region participate in cellular localization of yeast glycosylphosphatidylinositol-attached proteins.</title>
        <authorList>
            <person name="Hamada K."/>
            <person name="Terashima H."/>
            <person name="Arisawa M."/>
            <person name="Yabuki N."/>
            <person name="Kitada K."/>
        </authorList>
    </citation>
    <scope>SUBCELLULAR LOCATION</scope>
</reference>
<reference key="4">
    <citation type="journal article" date="2001" name="J. Bacteriol.">
        <title>Reciprocal regulation of anaerobic and aerobic cell wall mannoprotein gene expression in Saccharomyces cerevisiae.</title>
        <authorList>
            <person name="Abramova N.E."/>
            <person name="Sertil O."/>
            <person name="Mehta S."/>
            <person name="Lowry C.V."/>
        </authorList>
    </citation>
    <scope>FUNCTION</scope>
    <scope>INDUCTION</scope>
</reference>
<accession>P40552</accession>
<accession>D6VVR8</accession>
<dbReference type="EMBL" id="Z38113">
    <property type="protein sequence ID" value="CAA86238.1"/>
    <property type="molecule type" value="Genomic_DNA"/>
</dbReference>
<dbReference type="EMBL" id="BK006942">
    <property type="protein sequence ID" value="DAA08534.1"/>
    <property type="molecule type" value="Genomic_DNA"/>
</dbReference>
<dbReference type="PIR" id="S48444">
    <property type="entry name" value="S48444"/>
</dbReference>
<dbReference type="RefSeq" id="NP_012254.1">
    <property type="nucleotide sequence ID" value="NM_001179361.1"/>
</dbReference>
<dbReference type="SMR" id="P40552"/>
<dbReference type="BioGRID" id="34979">
    <property type="interactions" value="33"/>
</dbReference>
<dbReference type="DIP" id="DIP-1895N"/>
<dbReference type="FunCoup" id="P40552">
    <property type="interactions" value="75"/>
</dbReference>
<dbReference type="IntAct" id="P40552">
    <property type="interactions" value="1"/>
</dbReference>
<dbReference type="MINT" id="P40552"/>
<dbReference type="STRING" id="4932.YIL011W"/>
<dbReference type="GlyCosmos" id="P40552">
    <property type="glycosylation" value="1 site, No reported glycans"/>
</dbReference>
<dbReference type="GlyGen" id="P40552">
    <property type="glycosylation" value="1 site"/>
</dbReference>
<dbReference type="PaxDb" id="4932-YIL011W"/>
<dbReference type="PeptideAtlas" id="P40552"/>
<dbReference type="EnsemblFungi" id="YIL011W_mRNA">
    <property type="protein sequence ID" value="YIL011W"/>
    <property type="gene ID" value="YIL011W"/>
</dbReference>
<dbReference type="GeneID" id="854804"/>
<dbReference type="KEGG" id="sce:YIL011W"/>
<dbReference type="AGR" id="SGD:S000001273"/>
<dbReference type="SGD" id="S000001273">
    <property type="gene designation" value="TIR3"/>
</dbReference>
<dbReference type="VEuPathDB" id="FungiDB:YIL011W"/>
<dbReference type="eggNOG" id="ENOG502RZ9R">
    <property type="taxonomic scope" value="Eukaryota"/>
</dbReference>
<dbReference type="GeneTree" id="ENSGT00940000176276"/>
<dbReference type="HOGENOM" id="CLU_071083_1_1_1"/>
<dbReference type="InParanoid" id="P40552"/>
<dbReference type="OMA" id="QLPWYTT"/>
<dbReference type="OrthoDB" id="4069694at2759"/>
<dbReference type="BioCyc" id="YEAST:G3O-31288-MONOMER"/>
<dbReference type="BioGRID-ORCS" id="854804">
    <property type="hits" value="0 hits in 10 CRISPR screens"/>
</dbReference>
<dbReference type="PRO" id="PR:P40552"/>
<dbReference type="Proteomes" id="UP000002311">
    <property type="component" value="Chromosome IX"/>
</dbReference>
<dbReference type="RNAct" id="P40552">
    <property type="molecule type" value="protein"/>
</dbReference>
<dbReference type="GO" id="GO:0071944">
    <property type="term" value="C:cell periphery"/>
    <property type="evidence" value="ECO:0007005"/>
    <property type="project" value="SGD"/>
</dbReference>
<dbReference type="GO" id="GO:0005576">
    <property type="term" value="C:extracellular region"/>
    <property type="evidence" value="ECO:0007669"/>
    <property type="project" value="UniProtKB-KW"/>
</dbReference>
<dbReference type="GO" id="GO:0009277">
    <property type="term" value="C:fungal-type cell wall"/>
    <property type="evidence" value="ECO:0000314"/>
    <property type="project" value="SGD"/>
</dbReference>
<dbReference type="GO" id="GO:0000324">
    <property type="term" value="C:fungal-type vacuole"/>
    <property type="evidence" value="ECO:0007005"/>
    <property type="project" value="SGD"/>
</dbReference>
<dbReference type="GO" id="GO:0098552">
    <property type="term" value="C:side of membrane"/>
    <property type="evidence" value="ECO:0007669"/>
    <property type="project" value="UniProtKB-KW"/>
</dbReference>
<dbReference type="GO" id="GO:0005199">
    <property type="term" value="F:structural constituent of cell wall"/>
    <property type="evidence" value="ECO:0000318"/>
    <property type="project" value="GO_Central"/>
</dbReference>
<dbReference type="GO" id="GO:0031505">
    <property type="term" value="P:fungal-type cell wall organization"/>
    <property type="evidence" value="ECO:0000318"/>
    <property type="project" value="GO_Central"/>
</dbReference>
<dbReference type="InterPro" id="IPR000992">
    <property type="entry name" value="SRP1_TIP1"/>
</dbReference>
<dbReference type="InterPro" id="IPR050788">
    <property type="entry name" value="Yeast_SRP1/TIP1_CWP"/>
</dbReference>
<dbReference type="PANTHER" id="PTHR31002:SF34">
    <property type="entry name" value="CELL WALL PROTEIN CWP1-RELATED"/>
    <property type="match status" value="1"/>
</dbReference>
<dbReference type="PANTHER" id="PTHR31002">
    <property type="entry name" value="SERIPAUPERIN"/>
    <property type="match status" value="1"/>
</dbReference>
<dbReference type="Pfam" id="PF00660">
    <property type="entry name" value="SRP1_TIP1"/>
    <property type="match status" value="1"/>
</dbReference>
<dbReference type="PROSITE" id="PS00724">
    <property type="entry name" value="SRP1_TIP1"/>
    <property type="match status" value="1"/>
</dbReference>
<gene>
    <name type="primary">TIR3</name>
    <name type="synonym">YIB1</name>
    <name type="ordered locus">YIL011W</name>
</gene>
<sequence>MSFTKIAALLAVAAASTQLVSAEVGQYEIVEFDAILADVKANLEQYMSLAMNNPDFTLPSGVLDVYQHMTTATDDSYTSYFTEMDFAQITTAMVQVPWYSSRLEPEIIAALQSAGISITSLGQTVSESGSESATASSDASSASESSSAASSSASESSSAASSSASESSSAASSSASESSSAASSSASEAAKSSSSAKSSGSSAASSAASSASSKASSAASSSAKASSSAEKSTNSSSSATSKNAGAAMDMGFFSAGVGAAIAGAAAMLL</sequence>
<comment type="function">
    <text evidence="4">Component of the cell wall. Required for anaerobic growth.</text>
</comment>
<comment type="subcellular location">
    <subcellularLocation>
        <location evidence="6">Secreted</location>
        <location evidence="6">Cell wall</location>
    </subcellularLocation>
    <subcellularLocation>
        <location evidence="5">Membrane</location>
        <topology evidence="5">Lipid-anchor</topology>
        <topology evidence="5">GPI-anchor</topology>
    </subcellularLocation>
</comment>
<comment type="induction">
    <text evidence="4">Induced during anaerobic growth.</text>
</comment>
<comment type="PTM">
    <text evidence="1">Extensively O-glycosylated.</text>
</comment>
<comment type="PTM">
    <text evidence="1">The GPI-anchor is attached to the protein in the endoplasmic reticulum and serves to target the protein to the cell surface. There, the glucosamine-inositol phospholipid moiety is cleaved off and the GPI-modified mannoprotein is covalently attached via its lipidless GPI glycan remnant to the 1,6-beta-glucan of the outer cell wall layer (By similarity).</text>
</comment>
<comment type="similarity">
    <text evidence="5">Belongs to the SRP1/TIP1 family.</text>
</comment>
<organism>
    <name type="scientific">Saccharomyces cerevisiae (strain ATCC 204508 / S288c)</name>
    <name type="common">Baker's yeast</name>
    <dbReference type="NCBI Taxonomy" id="559292"/>
    <lineage>
        <taxon>Eukaryota</taxon>
        <taxon>Fungi</taxon>
        <taxon>Dikarya</taxon>
        <taxon>Ascomycota</taxon>
        <taxon>Saccharomycotina</taxon>
        <taxon>Saccharomycetes</taxon>
        <taxon>Saccharomycetales</taxon>
        <taxon>Saccharomycetaceae</taxon>
        <taxon>Saccharomyces</taxon>
    </lineage>
</organism>
<feature type="signal peptide" evidence="2">
    <location>
        <begin position="1"/>
        <end position="22"/>
    </location>
</feature>
<feature type="chain" id="PRO_0000033236" description="Cell wall protein TIR3">
    <location>
        <begin position="23"/>
        <end position="245"/>
    </location>
</feature>
<feature type="propeptide" id="PRO_0000372446" description="Removed in mature form" evidence="2">
    <location>
        <begin position="246"/>
        <end position="269"/>
    </location>
</feature>
<feature type="region of interest" description="Disordered" evidence="3">
    <location>
        <begin position="128"/>
        <end position="242"/>
    </location>
</feature>
<feature type="lipid moiety-binding region" description="GPI-anchor amidated glycine" evidence="2">
    <location>
        <position position="245"/>
    </location>
</feature>
<feature type="glycosylation site" description="N-linked (GlcNAc...) asparagine" evidence="2">
    <location>
        <position position="234"/>
    </location>
</feature>
<name>TIR3_YEAST</name>
<protein>
    <recommendedName>
        <fullName>Cell wall protein TIR3</fullName>
    </recommendedName>
    <alternativeName>
        <fullName>TIP1-related protein 3</fullName>
    </alternativeName>
</protein>